<name>Y2505_BACCQ</name>
<dbReference type="EMBL" id="CP000227">
    <property type="protein sequence ID" value="ACM12933.1"/>
    <property type="molecule type" value="Genomic_DNA"/>
</dbReference>
<dbReference type="SMR" id="B9J1Z7"/>
<dbReference type="KEGG" id="bcq:BCQ_2505"/>
<dbReference type="HOGENOM" id="CLU_120023_0_0_9"/>
<dbReference type="Proteomes" id="UP000000441">
    <property type="component" value="Chromosome"/>
</dbReference>
<dbReference type="GO" id="GO:0005886">
    <property type="term" value="C:plasma membrane"/>
    <property type="evidence" value="ECO:0007669"/>
    <property type="project" value="UniProtKB-SubCell"/>
</dbReference>
<dbReference type="Gene3D" id="1.10.1760.20">
    <property type="match status" value="1"/>
</dbReference>
<dbReference type="HAMAP" id="MF_01572">
    <property type="entry name" value="UPF0397"/>
    <property type="match status" value="1"/>
</dbReference>
<dbReference type="InterPro" id="IPR009825">
    <property type="entry name" value="ECF_substrate-spec-like"/>
</dbReference>
<dbReference type="InterPro" id="IPR022914">
    <property type="entry name" value="UPF0397"/>
</dbReference>
<dbReference type="NCBIfam" id="NF010182">
    <property type="entry name" value="PRK13661.1"/>
    <property type="match status" value="1"/>
</dbReference>
<dbReference type="PANTHER" id="PTHR37815">
    <property type="entry name" value="UPF0397 PROTEIN BC_2624-RELATED"/>
    <property type="match status" value="1"/>
</dbReference>
<dbReference type="PANTHER" id="PTHR37815:SF3">
    <property type="entry name" value="UPF0397 PROTEIN SPR0429"/>
    <property type="match status" value="1"/>
</dbReference>
<dbReference type="Pfam" id="PF07155">
    <property type="entry name" value="ECF-ribofla_trS"/>
    <property type="match status" value="1"/>
</dbReference>
<organism>
    <name type="scientific">Bacillus cereus (strain Q1)</name>
    <dbReference type="NCBI Taxonomy" id="361100"/>
    <lineage>
        <taxon>Bacteria</taxon>
        <taxon>Bacillati</taxon>
        <taxon>Bacillota</taxon>
        <taxon>Bacilli</taxon>
        <taxon>Bacillales</taxon>
        <taxon>Bacillaceae</taxon>
        <taxon>Bacillus</taxon>
        <taxon>Bacillus cereus group</taxon>
    </lineage>
</organism>
<evidence type="ECO:0000255" key="1">
    <source>
        <dbReference type="HAMAP-Rule" id="MF_01572"/>
    </source>
</evidence>
<feature type="chain" id="PRO_1000185568" description="UPF0397 protein BCQ_2505">
    <location>
        <begin position="1"/>
        <end position="182"/>
    </location>
</feature>
<feature type="transmembrane region" description="Helical" evidence="1">
    <location>
        <begin position="9"/>
        <end position="29"/>
    </location>
</feature>
<feature type="transmembrane region" description="Helical" evidence="1">
    <location>
        <begin position="40"/>
        <end position="60"/>
    </location>
</feature>
<feature type="transmembrane region" description="Helical" evidence="1">
    <location>
        <begin position="71"/>
        <end position="91"/>
    </location>
</feature>
<feature type="transmembrane region" description="Helical" evidence="1">
    <location>
        <begin position="114"/>
        <end position="134"/>
    </location>
</feature>
<feature type="transmembrane region" description="Helical" evidence="1">
    <location>
        <begin position="142"/>
        <end position="162"/>
    </location>
</feature>
<proteinExistence type="inferred from homology"/>
<sequence length="182" mass="19118">MNKLSTKLVVAIGIGAALYGILGLWGFSIAPNTFIKPALAILTVFGALFGPVAGLLIGLIGHTVTDTIAGWGIWWGWVISSGIIGFAMGFIQKRVGFSVKNGTYNKGDISYLAITGLIGIVIAIIFAGAFDIIVMGEPFDKIVIQVLGATIADVIVFLVLGLPITIGLAKSNKKHAHLKIEK</sequence>
<comment type="subcellular location">
    <subcellularLocation>
        <location evidence="1">Cell membrane</location>
        <topology evidence="1">Multi-pass membrane protein</topology>
    </subcellularLocation>
</comment>
<comment type="similarity">
    <text evidence="1">Belongs to the UPF0397 family.</text>
</comment>
<gene>
    <name type="ordered locus">BCQ_2505</name>
</gene>
<protein>
    <recommendedName>
        <fullName evidence="1">UPF0397 protein BCQ_2505</fullName>
    </recommendedName>
</protein>
<keyword id="KW-1003">Cell membrane</keyword>
<keyword id="KW-0472">Membrane</keyword>
<keyword id="KW-0812">Transmembrane</keyword>
<keyword id="KW-1133">Transmembrane helix</keyword>
<accession>B9J1Z7</accession>
<reference key="1">
    <citation type="journal article" date="2009" name="J. Bacteriol.">
        <title>Complete genome sequence of the extremophilic Bacillus cereus strain Q1 with industrial applications.</title>
        <authorList>
            <person name="Xiong Z."/>
            <person name="Jiang Y."/>
            <person name="Qi D."/>
            <person name="Lu H."/>
            <person name="Yang F."/>
            <person name="Yang J."/>
            <person name="Chen L."/>
            <person name="Sun L."/>
            <person name="Xu X."/>
            <person name="Xue Y."/>
            <person name="Zhu Y."/>
            <person name="Jin Q."/>
        </authorList>
    </citation>
    <scope>NUCLEOTIDE SEQUENCE [LARGE SCALE GENOMIC DNA]</scope>
    <source>
        <strain>Q1</strain>
    </source>
</reference>